<comment type="function">
    <text evidence="1">NDH-1 shuttles electrons from NADH, via FMN and iron-sulfur (Fe-S) centers, to quinones in the respiratory chain. The immediate electron acceptor for the enzyme in this species is believed to be ubiquinone. Couples the redox reaction to proton translocation (for every two electrons transferred, four hydrogen ions are translocated across the cytoplasmic membrane), and thus conserves the redox energy in a proton gradient.</text>
</comment>
<comment type="catalytic activity">
    <reaction evidence="1">
        <text>a quinone + NADH + 5 H(+)(in) = a quinol + NAD(+) + 4 H(+)(out)</text>
        <dbReference type="Rhea" id="RHEA:57888"/>
        <dbReference type="ChEBI" id="CHEBI:15378"/>
        <dbReference type="ChEBI" id="CHEBI:24646"/>
        <dbReference type="ChEBI" id="CHEBI:57540"/>
        <dbReference type="ChEBI" id="CHEBI:57945"/>
        <dbReference type="ChEBI" id="CHEBI:132124"/>
    </reaction>
</comment>
<comment type="subunit">
    <text evidence="1">NDH-1 is composed of 13 different subunits. Subunits NuoA, H, J, K, L, M, N constitute the membrane sector of the complex.</text>
</comment>
<comment type="subcellular location">
    <subcellularLocation>
        <location evidence="1">Cell inner membrane</location>
        <topology evidence="1">Multi-pass membrane protein</topology>
    </subcellularLocation>
</comment>
<comment type="similarity">
    <text evidence="1">Belongs to the complex I subunit 2 family.</text>
</comment>
<evidence type="ECO:0000255" key="1">
    <source>
        <dbReference type="HAMAP-Rule" id="MF_00445"/>
    </source>
</evidence>
<protein>
    <recommendedName>
        <fullName evidence="1">NADH-quinone oxidoreductase subunit N</fullName>
        <ecNumber evidence="1">7.1.1.-</ecNumber>
    </recommendedName>
    <alternativeName>
        <fullName evidence="1">NADH dehydrogenase I subunit N</fullName>
    </alternativeName>
    <alternativeName>
        <fullName evidence="1">NDH-1 subunit N</fullName>
    </alternativeName>
</protein>
<keyword id="KW-0997">Cell inner membrane</keyword>
<keyword id="KW-1003">Cell membrane</keyword>
<keyword id="KW-0472">Membrane</keyword>
<keyword id="KW-0520">NAD</keyword>
<keyword id="KW-0874">Quinone</keyword>
<keyword id="KW-1278">Translocase</keyword>
<keyword id="KW-0812">Transmembrane</keyword>
<keyword id="KW-1133">Transmembrane helix</keyword>
<keyword id="KW-0813">Transport</keyword>
<keyword id="KW-0830">Ubiquinone</keyword>
<sequence>MTITPQNLIALLPLLIVGLTVVVVMLSIAWRRNHFLNATLSVIGLNAALVSLWFVGQAGAMDVTPLMRVDGFAMLYTGLVLLASLATCTFAYPWLEGYNDNKDEFYLLVLIAALGGILLANANHLASLFLGIELISLPLFGLVGYAFRQKRSLEASIKYTILSAAASSFLLFGMALVYAQSGDLSFVALGKNLGDGMLNEPLLLAGFGLMIVGLGFKLSLVPFHLWTPDVYQGAPAPVSTFLATASKIAIFGVVMRLFLYAPVGDSEAIRVVLAIIAFASIIFGNLMALSQTNIKRLLGYSSISHLGYLLVALIALQTGEMSMEAVGVYLAGYLFSSLGAFGVVSLMSSPYRGPDADSLFSYRGLFWHRPILAAVMTVMMLSLAGIPMTLGFIGKFYVLAVGVQAHLWWLVGAVVVGSAIGLYYYLRVAVSLYLHAPEQPGRDAPSNWQYSAGGIVVLISALLVLVLGVWPQPLISIVRLAMPLM</sequence>
<proteinExistence type="inferred from homology"/>
<feature type="chain" id="PRO_1000145868" description="NADH-quinone oxidoreductase subunit N">
    <location>
        <begin position="1"/>
        <end position="485"/>
    </location>
</feature>
<feature type="transmembrane region" description="Helical" evidence="1">
    <location>
        <begin position="8"/>
        <end position="28"/>
    </location>
</feature>
<feature type="transmembrane region" description="Helical" evidence="1">
    <location>
        <begin position="35"/>
        <end position="55"/>
    </location>
</feature>
<feature type="transmembrane region" description="Helical" evidence="1">
    <location>
        <begin position="71"/>
        <end position="91"/>
    </location>
</feature>
<feature type="transmembrane region" description="Helical" evidence="1">
    <location>
        <begin position="105"/>
        <end position="125"/>
    </location>
</feature>
<feature type="transmembrane region" description="Helical" evidence="1">
    <location>
        <begin position="127"/>
        <end position="147"/>
    </location>
</feature>
<feature type="transmembrane region" description="Helical" evidence="1">
    <location>
        <begin position="159"/>
        <end position="179"/>
    </location>
</feature>
<feature type="transmembrane region" description="Helical" evidence="1">
    <location>
        <begin position="203"/>
        <end position="223"/>
    </location>
</feature>
<feature type="transmembrane region" description="Helical" evidence="1">
    <location>
        <begin position="235"/>
        <end position="255"/>
    </location>
</feature>
<feature type="transmembrane region" description="Helical" evidence="1">
    <location>
        <begin position="271"/>
        <end position="291"/>
    </location>
</feature>
<feature type="transmembrane region" description="Helical" evidence="1">
    <location>
        <begin position="297"/>
        <end position="317"/>
    </location>
</feature>
<feature type="transmembrane region" description="Helical" evidence="1">
    <location>
        <begin position="326"/>
        <end position="346"/>
    </location>
</feature>
<feature type="transmembrane region" description="Helical" evidence="1">
    <location>
        <begin position="373"/>
        <end position="393"/>
    </location>
</feature>
<feature type="transmembrane region" description="Helical" evidence="1">
    <location>
        <begin position="408"/>
        <end position="430"/>
    </location>
</feature>
<feature type="transmembrane region" description="Helical" evidence="1">
    <location>
        <begin position="455"/>
        <end position="475"/>
    </location>
</feature>
<dbReference type="EC" id="7.1.1.-" evidence="1"/>
<dbReference type="EMBL" id="CU928160">
    <property type="protein sequence ID" value="CAQ99192.1"/>
    <property type="molecule type" value="Genomic_DNA"/>
</dbReference>
<dbReference type="RefSeq" id="WP_000156701.1">
    <property type="nucleotide sequence ID" value="NC_011741.1"/>
</dbReference>
<dbReference type="SMR" id="B7M5V5"/>
<dbReference type="GeneID" id="75205678"/>
<dbReference type="KEGG" id="ecr:ECIAI1_2350"/>
<dbReference type="HOGENOM" id="CLU_007100_1_5_6"/>
<dbReference type="GO" id="GO:0005886">
    <property type="term" value="C:plasma membrane"/>
    <property type="evidence" value="ECO:0007669"/>
    <property type="project" value="UniProtKB-SubCell"/>
</dbReference>
<dbReference type="GO" id="GO:0008137">
    <property type="term" value="F:NADH dehydrogenase (ubiquinone) activity"/>
    <property type="evidence" value="ECO:0007669"/>
    <property type="project" value="InterPro"/>
</dbReference>
<dbReference type="GO" id="GO:0050136">
    <property type="term" value="F:NADH:ubiquinone reductase (non-electrogenic) activity"/>
    <property type="evidence" value="ECO:0007669"/>
    <property type="project" value="UniProtKB-UniRule"/>
</dbReference>
<dbReference type="GO" id="GO:0048038">
    <property type="term" value="F:quinone binding"/>
    <property type="evidence" value="ECO:0007669"/>
    <property type="project" value="UniProtKB-KW"/>
</dbReference>
<dbReference type="GO" id="GO:0042773">
    <property type="term" value="P:ATP synthesis coupled electron transport"/>
    <property type="evidence" value="ECO:0007669"/>
    <property type="project" value="InterPro"/>
</dbReference>
<dbReference type="HAMAP" id="MF_00445">
    <property type="entry name" value="NDH1_NuoN_1"/>
    <property type="match status" value="1"/>
</dbReference>
<dbReference type="InterPro" id="IPR010096">
    <property type="entry name" value="NADH-Q_OxRdtase_suN/2"/>
</dbReference>
<dbReference type="InterPro" id="IPR001750">
    <property type="entry name" value="ND/Mrp_TM"/>
</dbReference>
<dbReference type="NCBIfam" id="TIGR01770">
    <property type="entry name" value="NDH_I_N"/>
    <property type="match status" value="1"/>
</dbReference>
<dbReference type="NCBIfam" id="NF004439">
    <property type="entry name" value="PRK05777.1-1"/>
    <property type="match status" value="1"/>
</dbReference>
<dbReference type="PANTHER" id="PTHR22773">
    <property type="entry name" value="NADH DEHYDROGENASE"/>
    <property type="match status" value="1"/>
</dbReference>
<dbReference type="Pfam" id="PF00361">
    <property type="entry name" value="Proton_antipo_M"/>
    <property type="match status" value="1"/>
</dbReference>
<name>NUON_ECO8A</name>
<gene>
    <name evidence="1" type="primary">nuoN</name>
    <name type="ordered locus">ECIAI1_2350</name>
</gene>
<organism>
    <name type="scientific">Escherichia coli O8 (strain IAI1)</name>
    <dbReference type="NCBI Taxonomy" id="585034"/>
    <lineage>
        <taxon>Bacteria</taxon>
        <taxon>Pseudomonadati</taxon>
        <taxon>Pseudomonadota</taxon>
        <taxon>Gammaproteobacteria</taxon>
        <taxon>Enterobacterales</taxon>
        <taxon>Enterobacteriaceae</taxon>
        <taxon>Escherichia</taxon>
    </lineage>
</organism>
<accession>B7M5V5</accession>
<reference key="1">
    <citation type="journal article" date="2009" name="PLoS Genet.">
        <title>Organised genome dynamics in the Escherichia coli species results in highly diverse adaptive paths.</title>
        <authorList>
            <person name="Touchon M."/>
            <person name="Hoede C."/>
            <person name="Tenaillon O."/>
            <person name="Barbe V."/>
            <person name="Baeriswyl S."/>
            <person name="Bidet P."/>
            <person name="Bingen E."/>
            <person name="Bonacorsi S."/>
            <person name="Bouchier C."/>
            <person name="Bouvet O."/>
            <person name="Calteau A."/>
            <person name="Chiapello H."/>
            <person name="Clermont O."/>
            <person name="Cruveiller S."/>
            <person name="Danchin A."/>
            <person name="Diard M."/>
            <person name="Dossat C."/>
            <person name="Karoui M.E."/>
            <person name="Frapy E."/>
            <person name="Garry L."/>
            <person name="Ghigo J.M."/>
            <person name="Gilles A.M."/>
            <person name="Johnson J."/>
            <person name="Le Bouguenec C."/>
            <person name="Lescat M."/>
            <person name="Mangenot S."/>
            <person name="Martinez-Jehanne V."/>
            <person name="Matic I."/>
            <person name="Nassif X."/>
            <person name="Oztas S."/>
            <person name="Petit M.A."/>
            <person name="Pichon C."/>
            <person name="Rouy Z."/>
            <person name="Ruf C.S."/>
            <person name="Schneider D."/>
            <person name="Tourret J."/>
            <person name="Vacherie B."/>
            <person name="Vallenet D."/>
            <person name="Medigue C."/>
            <person name="Rocha E.P.C."/>
            <person name="Denamur E."/>
        </authorList>
    </citation>
    <scope>NUCLEOTIDE SEQUENCE [LARGE SCALE GENOMIC DNA]</scope>
    <source>
        <strain>IAI1</strain>
    </source>
</reference>